<evidence type="ECO:0000250" key="1"/>
<evidence type="ECO:0000255" key="2">
    <source>
        <dbReference type="HAMAP-Rule" id="MF_00403"/>
    </source>
</evidence>
<evidence type="ECO:0000256" key="3">
    <source>
        <dbReference type="SAM" id="MobiDB-lite"/>
    </source>
</evidence>
<evidence type="ECO:0000305" key="4"/>
<organism>
    <name type="scientific">Natranaerobius thermophilus (strain ATCC BAA-1301 / DSM 18059 / JW/NM-WN-LF)</name>
    <dbReference type="NCBI Taxonomy" id="457570"/>
    <lineage>
        <taxon>Bacteria</taxon>
        <taxon>Bacillati</taxon>
        <taxon>Bacillota</taxon>
        <taxon>Clostridia</taxon>
        <taxon>Natranaerobiales</taxon>
        <taxon>Natranaerobiaceae</taxon>
        <taxon>Natranaerobius</taxon>
    </lineage>
</organism>
<gene>
    <name evidence="2" type="primary">rpsL</name>
    <name type="ordered locus">Nther_0189</name>
</gene>
<comment type="function">
    <text evidence="2">With S4 and S5 plays an important role in translational accuracy.</text>
</comment>
<comment type="function">
    <text evidence="2">Interacts with and stabilizes bases of the 16S rRNA that are involved in tRNA selection in the A site and with the mRNA backbone. Located at the interface of the 30S and 50S subunits, it traverses the body of the 30S subunit contacting proteins on the other side and probably holding the rRNA structure together. The combined cluster of proteins S8, S12 and S17 appears to hold together the shoulder and platform of the 30S subunit.</text>
</comment>
<comment type="subunit">
    <text evidence="2">Part of the 30S ribosomal subunit. Contacts proteins S8 and S17. May interact with IF1 in the 30S initiation complex.</text>
</comment>
<comment type="similarity">
    <text evidence="2">Belongs to the universal ribosomal protein uS12 family.</text>
</comment>
<feature type="chain" id="PRO_1000194198" description="Small ribosomal subunit protein uS12">
    <location>
        <begin position="1"/>
        <end position="122"/>
    </location>
</feature>
<feature type="region of interest" description="Disordered" evidence="3">
    <location>
        <begin position="1"/>
        <end position="24"/>
    </location>
</feature>
<feature type="compositionally biased region" description="Basic residues" evidence="3">
    <location>
        <begin position="8"/>
        <end position="20"/>
    </location>
</feature>
<feature type="modified residue" description="3-methylthioaspartic acid" evidence="1">
    <location>
        <position position="89"/>
    </location>
</feature>
<dbReference type="EMBL" id="CP001034">
    <property type="protein sequence ID" value="ACB83788.1"/>
    <property type="molecule type" value="Genomic_DNA"/>
</dbReference>
<dbReference type="RefSeq" id="WP_012446678.1">
    <property type="nucleotide sequence ID" value="NC_010718.1"/>
</dbReference>
<dbReference type="SMR" id="B2A4D4"/>
<dbReference type="FunCoup" id="B2A4D4">
    <property type="interactions" value="390"/>
</dbReference>
<dbReference type="STRING" id="457570.Nther_0189"/>
<dbReference type="KEGG" id="nth:Nther_0189"/>
<dbReference type="eggNOG" id="COG0048">
    <property type="taxonomic scope" value="Bacteria"/>
</dbReference>
<dbReference type="HOGENOM" id="CLU_104295_1_2_9"/>
<dbReference type="InParanoid" id="B2A4D4"/>
<dbReference type="OrthoDB" id="9802366at2"/>
<dbReference type="Proteomes" id="UP000001683">
    <property type="component" value="Chromosome"/>
</dbReference>
<dbReference type="GO" id="GO:0015935">
    <property type="term" value="C:small ribosomal subunit"/>
    <property type="evidence" value="ECO:0007669"/>
    <property type="project" value="InterPro"/>
</dbReference>
<dbReference type="GO" id="GO:0019843">
    <property type="term" value="F:rRNA binding"/>
    <property type="evidence" value="ECO:0007669"/>
    <property type="project" value="UniProtKB-UniRule"/>
</dbReference>
<dbReference type="GO" id="GO:0003735">
    <property type="term" value="F:structural constituent of ribosome"/>
    <property type="evidence" value="ECO:0007669"/>
    <property type="project" value="InterPro"/>
</dbReference>
<dbReference type="GO" id="GO:0000049">
    <property type="term" value="F:tRNA binding"/>
    <property type="evidence" value="ECO:0007669"/>
    <property type="project" value="UniProtKB-UniRule"/>
</dbReference>
<dbReference type="GO" id="GO:0006412">
    <property type="term" value="P:translation"/>
    <property type="evidence" value="ECO:0007669"/>
    <property type="project" value="UniProtKB-UniRule"/>
</dbReference>
<dbReference type="CDD" id="cd03368">
    <property type="entry name" value="Ribosomal_S12"/>
    <property type="match status" value="1"/>
</dbReference>
<dbReference type="FunFam" id="2.40.50.140:FF:000001">
    <property type="entry name" value="30S ribosomal protein S12"/>
    <property type="match status" value="1"/>
</dbReference>
<dbReference type="Gene3D" id="2.40.50.140">
    <property type="entry name" value="Nucleic acid-binding proteins"/>
    <property type="match status" value="1"/>
</dbReference>
<dbReference type="HAMAP" id="MF_00403_B">
    <property type="entry name" value="Ribosomal_uS12_B"/>
    <property type="match status" value="1"/>
</dbReference>
<dbReference type="InterPro" id="IPR012340">
    <property type="entry name" value="NA-bd_OB-fold"/>
</dbReference>
<dbReference type="InterPro" id="IPR006032">
    <property type="entry name" value="Ribosomal_uS12"/>
</dbReference>
<dbReference type="InterPro" id="IPR005679">
    <property type="entry name" value="Ribosomal_uS12_bac"/>
</dbReference>
<dbReference type="NCBIfam" id="TIGR00981">
    <property type="entry name" value="rpsL_bact"/>
    <property type="match status" value="1"/>
</dbReference>
<dbReference type="PANTHER" id="PTHR11652">
    <property type="entry name" value="30S RIBOSOMAL PROTEIN S12 FAMILY MEMBER"/>
    <property type="match status" value="1"/>
</dbReference>
<dbReference type="Pfam" id="PF00164">
    <property type="entry name" value="Ribosom_S12_S23"/>
    <property type="match status" value="1"/>
</dbReference>
<dbReference type="PIRSF" id="PIRSF002133">
    <property type="entry name" value="Ribosomal_S12/S23"/>
    <property type="match status" value="1"/>
</dbReference>
<dbReference type="PRINTS" id="PR01034">
    <property type="entry name" value="RIBOSOMALS12"/>
</dbReference>
<dbReference type="SUPFAM" id="SSF50249">
    <property type="entry name" value="Nucleic acid-binding proteins"/>
    <property type="match status" value="1"/>
</dbReference>
<dbReference type="PROSITE" id="PS00055">
    <property type="entry name" value="RIBOSOMAL_S12"/>
    <property type="match status" value="1"/>
</dbReference>
<reference key="1">
    <citation type="submission" date="2008-04" db="EMBL/GenBank/DDBJ databases">
        <title>Complete sequence of chromosome of Natranaerobius thermophilus JW/NM-WN-LF.</title>
        <authorList>
            <consortium name="US DOE Joint Genome Institute"/>
            <person name="Copeland A."/>
            <person name="Lucas S."/>
            <person name="Lapidus A."/>
            <person name="Glavina del Rio T."/>
            <person name="Dalin E."/>
            <person name="Tice H."/>
            <person name="Bruce D."/>
            <person name="Goodwin L."/>
            <person name="Pitluck S."/>
            <person name="Chertkov O."/>
            <person name="Brettin T."/>
            <person name="Detter J.C."/>
            <person name="Han C."/>
            <person name="Kuske C.R."/>
            <person name="Schmutz J."/>
            <person name="Larimer F."/>
            <person name="Land M."/>
            <person name="Hauser L."/>
            <person name="Kyrpides N."/>
            <person name="Lykidis A."/>
            <person name="Mesbah N.M."/>
            <person name="Wiegel J."/>
        </authorList>
    </citation>
    <scope>NUCLEOTIDE SEQUENCE [LARGE SCALE GENOMIC DNA]</scope>
    <source>
        <strain>ATCC BAA-1301 / DSM 18059 / JW/NM-WN-LF</strain>
    </source>
</reference>
<sequence>MPTINQLIRKKRKSTGKKRTAPALEKCPQRRGVCTRVSTTTPKKPNSALRKIARVRLTNGMEVTAYIPGIGHNLQEHSVVLVRGGRVKDLPGVRYQVVRGALDTAGVEDRAQGRSKYGTKKG</sequence>
<accession>B2A4D4</accession>
<protein>
    <recommendedName>
        <fullName evidence="2">Small ribosomal subunit protein uS12</fullName>
    </recommendedName>
    <alternativeName>
        <fullName evidence="4">30S ribosomal protein S12</fullName>
    </alternativeName>
</protein>
<name>RS12_NATTJ</name>
<keyword id="KW-0488">Methylation</keyword>
<keyword id="KW-1185">Reference proteome</keyword>
<keyword id="KW-0687">Ribonucleoprotein</keyword>
<keyword id="KW-0689">Ribosomal protein</keyword>
<keyword id="KW-0694">RNA-binding</keyword>
<keyword id="KW-0699">rRNA-binding</keyword>
<keyword id="KW-0820">tRNA-binding</keyword>
<proteinExistence type="inferred from homology"/>